<evidence type="ECO:0000250" key="1">
    <source>
        <dbReference type="UniProtKB" id="P02649"/>
    </source>
</evidence>
<evidence type="ECO:0000250" key="2">
    <source>
        <dbReference type="UniProtKB" id="P08226"/>
    </source>
</evidence>
<evidence type="ECO:0000255" key="3"/>
<evidence type="ECO:0000305" key="4"/>
<dbReference type="EMBL" id="JABR01067514">
    <property type="status" value="NOT_ANNOTATED_CDS"/>
    <property type="molecule type" value="Genomic_DNA"/>
</dbReference>
<dbReference type="RefSeq" id="XP_010375815.1">
    <property type="nucleotide sequence ID" value="XM_010377513.1"/>
</dbReference>
<dbReference type="SMR" id="P0DO95"/>
<dbReference type="STRING" id="61622.ENSRROP00000010394"/>
<dbReference type="GlyCosmos" id="P0DO95">
    <property type="glycosylation" value="1 site, No reported glycans"/>
</dbReference>
<dbReference type="Ensembl" id="ENSRROT00000034492.1">
    <property type="protein sequence ID" value="ENSRROP00000010394.1"/>
    <property type="gene ID" value="ENSRROG00000029603.1"/>
</dbReference>
<dbReference type="GeneTree" id="ENSGT00950000182929"/>
<dbReference type="OMA" id="GHMTDAR"/>
<dbReference type="Proteomes" id="UP000233200">
    <property type="component" value="Unplaced"/>
</dbReference>
<dbReference type="GO" id="GO:0034360">
    <property type="term" value="C:chylomicron remnant"/>
    <property type="evidence" value="ECO:0007669"/>
    <property type="project" value="Ensembl"/>
</dbReference>
<dbReference type="GO" id="GO:0005783">
    <property type="term" value="C:endoplasmic reticulum"/>
    <property type="evidence" value="ECO:0007669"/>
    <property type="project" value="Ensembl"/>
</dbReference>
<dbReference type="GO" id="GO:0070062">
    <property type="term" value="C:extracellular exosome"/>
    <property type="evidence" value="ECO:0000250"/>
    <property type="project" value="UniProtKB"/>
</dbReference>
<dbReference type="GO" id="GO:0031012">
    <property type="term" value="C:extracellular matrix"/>
    <property type="evidence" value="ECO:0000250"/>
    <property type="project" value="UniProtKB"/>
</dbReference>
<dbReference type="GO" id="GO:0005615">
    <property type="term" value="C:extracellular space"/>
    <property type="evidence" value="ECO:0000250"/>
    <property type="project" value="UniProtKB"/>
</dbReference>
<dbReference type="GO" id="GO:0098978">
    <property type="term" value="C:glutamatergic synapse"/>
    <property type="evidence" value="ECO:0007669"/>
    <property type="project" value="Ensembl"/>
</dbReference>
<dbReference type="GO" id="GO:0005794">
    <property type="term" value="C:Golgi apparatus"/>
    <property type="evidence" value="ECO:0007669"/>
    <property type="project" value="Ensembl"/>
</dbReference>
<dbReference type="GO" id="GO:0034364">
    <property type="term" value="C:high-density lipoprotein particle"/>
    <property type="evidence" value="ECO:0000250"/>
    <property type="project" value="UniProtKB"/>
</dbReference>
<dbReference type="GO" id="GO:0034363">
    <property type="term" value="C:intermediate-density lipoprotein particle"/>
    <property type="evidence" value="ECO:0000250"/>
    <property type="project" value="UniProtKB"/>
</dbReference>
<dbReference type="GO" id="GO:0034362">
    <property type="term" value="C:low-density lipoprotein particle"/>
    <property type="evidence" value="ECO:0000250"/>
    <property type="project" value="UniProtKB"/>
</dbReference>
<dbReference type="GO" id="GO:0042470">
    <property type="term" value="C:melanosome"/>
    <property type="evidence" value="ECO:0007669"/>
    <property type="project" value="Ensembl"/>
</dbReference>
<dbReference type="GO" id="GO:0097487">
    <property type="term" value="C:multivesicular body, internal vesicle"/>
    <property type="evidence" value="ECO:0000250"/>
    <property type="project" value="UniProtKB"/>
</dbReference>
<dbReference type="GO" id="GO:0005886">
    <property type="term" value="C:plasma membrane"/>
    <property type="evidence" value="ECO:0007669"/>
    <property type="project" value="GOC"/>
</dbReference>
<dbReference type="GO" id="GO:0043083">
    <property type="term" value="C:synaptic cleft"/>
    <property type="evidence" value="ECO:0007669"/>
    <property type="project" value="Ensembl"/>
</dbReference>
<dbReference type="GO" id="GO:0034361">
    <property type="term" value="C:very-low-density lipoprotein particle"/>
    <property type="evidence" value="ECO:0000250"/>
    <property type="project" value="UniProtKB"/>
</dbReference>
<dbReference type="GO" id="GO:0001540">
    <property type="term" value="F:amyloid-beta binding"/>
    <property type="evidence" value="ECO:0007669"/>
    <property type="project" value="Ensembl"/>
</dbReference>
<dbReference type="GO" id="GO:0016209">
    <property type="term" value="F:antioxidant activity"/>
    <property type="evidence" value="ECO:0007669"/>
    <property type="project" value="Ensembl"/>
</dbReference>
<dbReference type="GO" id="GO:0120020">
    <property type="term" value="F:cholesterol transfer activity"/>
    <property type="evidence" value="ECO:0007669"/>
    <property type="project" value="Ensembl"/>
</dbReference>
<dbReference type="GO" id="GO:0019899">
    <property type="term" value="F:enzyme binding"/>
    <property type="evidence" value="ECO:0007669"/>
    <property type="project" value="Ensembl"/>
</dbReference>
<dbReference type="GO" id="GO:0043395">
    <property type="term" value="F:heparan sulfate proteoglycan binding"/>
    <property type="evidence" value="ECO:0000250"/>
    <property type="project" value="UniProtKB"/>
</dbReference>
<dbReference type="GO" id="GO:0008201">
    <property type="term" value="F:heparin binding"/>
    <property type="evidence" value="ECO:0000250"/>
    <property type="project" value="UniProtKB"/>
</dbReference>
<dbReference type="GO" id="GO:0042802">
    <property type="term" value="F:identical protein binding"/>
    <property type="evidence" value="ECO:0000250"/>
    <property type="project" value="UniProtKB"/>
</dbReference>
<dbReference type="GO" id="GO:0071813">
    <property type="term" value="F:lipoprotein particle binding"/>
    <property type="evidence" value="ECO:0007669"/>
    <property type="project" value="Ensembl"/>
</dbReference>
<dbReference type="GO" id="GO:0050750">
    <property type="term" value="F:low-density lipoprotein particle receptor binding"/>
    <property type="evidence" value="ECO:0000250"/>
    <property type="project" value="UniProtKB"/>
</dbReference>
<dbReference type="GO" id="GO:0046911">
    <property type="term" value="F:metal chelating activity"/>
    <property type="evidence" value="ECO:0007669"/>
    <property type="project" value="Ensembl"/>
</dbReference>
<dbReference type="GO" id="GO:0060228">
    <property type="term" value="F:phosphatidylcholine-sterol O-acyltransferase activator activity"/>
    <property type="evidence" value="ECO:0007669"/>
    <property type="project" value="Ensembl"/>
</dbReference>
<dbReference type="GO" id="GO:0005543">
    <property type="term" value="F:phospholipid binding"/>
    <property type="evidence" value="ECO:0007669"/>
    <property type="project" value="Ensembl"/>
</dbReference>
<dbReference type="GO" id="GO:0042803">
    <property type="term" value="F:protein homodimerization activity"/>
    <property type="evidence" value="ECO:0007669"/>
    <property type="project" value="Ensembl"/>
</dbReference>
<dbReference type="GO" id="GO:0048018">
    <property type="term" value="F:receptor ligand activity"/>
    <property type="evidence" value="ECO:0007669"/>
    <property type="project" value="Ensembl"/>
</dbReference>
<dbReference type="GO" id="GO:0048156">
    <property type="term" value="F:tau protein binding"/>
    <property type="evidence" value="ECO:0007669"/>
    <property type="project" value="Ensembl"/>
</dbReference>
<dbReference type="GO" id="GO:0070326">
    <property type="term" value="F:very-low-density lipoprotein particle receptor binding"/>
    <property type="evidence" value="ECO:0007669"/>
    <property type="project" value="Ensembl"/>
</dbReference>
<dbReference type="GO" id="GO:0097113">
    <property type="term" value="P:AMPA glutamate receptor clustering"/>
    <property type="evidence" value="ECO:0007669"/>
    <property type="project" value="Ensembl"/>
</dbReference>
<dbReference type="GO" id="GO:0042982">
    <property type="term" value="P:amyloid precursor protein metabolic process"/>
    <property type="evidence" value="ECO:0007669"/>
    <property type="project" value="Ensembl"/>
</dbReference>
<dbReference type="GO" id="GO:0048844">
    <property type="term" value="P:artery morphogenesis"/>
    <property type="evidence" value="ECO:0007669"/>
    <property type="project" value="Ensembl"/>
</dbReference>
<dbReference type="GO" id="GO:0071402">
    <property type="term" value="P:cellular response to lipoprotein particle stimulus"/>
    <property type="evidence" value="ECO:0007669"/>
    <property type="project" value="Ensembl"/>
</dbReference>
<dbReference type="GO" id="GO:0006707">
    <property type="term" value="P:cholesterol catabolic process"/>
    <property type="evidence" value="ECO:0007669"/>
    <property type="project" value="Ensembl"/>
</dbReference>
<dbReference type="GO" id="GO:0033344">
    <property type="term" value="P:cholesterol efflux"/>
    <property type="evidence" value="ECO:0000250"/>
    <property type="project" value="UniProtKB"/>
</dbReference>
<dbReference type="GO" id="GO:0042632">
    <property type="term" value="P:cholesterol homeostasis"/>
    <property type="evidence" value="ECO:0007669"/>
    <property type="project" value="Ensembl"/>
</dbReference>
<dbReference type="GO" id="GO:0034382">
    <property type="term" value="P:chylomicron remnant clearance"/>
    <property type="evidence" value="ECO:0000250"/>
    <property type="project" value="UniProtKB"/>
</dbReference>
<dbReference type="GO" id="GO:0055089">
    <property type="term" value="P:fatty acid homeostasis"/>
    <property type="evidence" value="ECO:0007669"/>
    <property type="project" value="Ensembl"/>
</dbReference>
<dbReference type="GO" id="GO:0007186">
    <property type="term" value="P:G protein-coupled receptor signaling pathway"/>
    <property type="evidence" value="ECO:0007669"/>
    <property type="project" value="Ensembl"/>
</dbReference>
<dbReference type="GO" id="GO:0010467">
    <property type="term" value="P:gene expression"/>
    <property type="evidence" value="ECO:0007669"/>
    <property type="project" value="Ensembl"/>
</dbReference>
<dbReference type="GO" id="GO:0034380">
    <property type="term" value="P:high-density lipoprotein particle assembly"/>
    <property type="evidence" value="ECO:0000250"/>
    <property type="project" value="UniProtKB"/>
</dbReference>
<dbReference type="GO" id="GO:0034384">
    <property type="term" value="P:high-density lipoprotein particle clearance"/>
    <property type="evidence" value="ECO:0007669"/>
    <property type="project" value="Ensembl"/>
</dbReference>
<dbReference type="GO" id="GO:0034375">
    <property type="term" value="P:high-density lipoprotein particle remodeling"/>
    <property type="evidence" value="ECO:0007669"/>
    <property type="project" value="Ensembl"/>
</dbReference>
<dbReference type="GO" id="GO:0071831">
    <property type="term" value="P:intermediate-density lipoprotein particle clearance"/>
    <property type="evidence" value="ECO:0000250"/>
    <property type="project" value="UniProtKB"/>
</dbReference>
<dbReference type="GO" id="GO:0006874">
    <property type="term" value="P:intracellular calcium ion homeostasis"/>
    <property type="evidence" value="ECO:0007669"/>
    <property type="project" value="Ensembl"/>
</dbReference>
<dbReference type="GO" id="GO:0010877">
    <property type="term" value="P:lipid transport involved in lipid storage"/>
    <property type="evidence" value="ECO:0007669"/>
    <property type="project" value="Ensembl"/>
</dbReference>
<dbReference type="GO" id="GO:0042158">
    <property type="term" value="P:lipoprotein biosynthetic process"/>
    <property type="evidence" value="ECO:0000250"/>
    <property type="project" value="UniProtKB"/>
</dbReference>
<dbReference type="GO" id="GO:0042159">
    <property type="term" value="P:lipoprotein catabolic process"/>
    <property type="evidence" value="ECO:0007669"/>
    <property type="project" value="Ensembl"/>
</dbReference>
<dbReference type="GO" id="GO:0035641">
    <property type="term" value="P:locomotory exploration behavior"/>
    <property type="evidence" value="ECO:0007669"/>
    <property type="project" value="Ensembl"/>
</dbReference>
<dbReference type="GO" id="GO:0015909">
    <property type="term" value="P:long-chain fatty acid transport"/>
    <property type="evidence" value="ECO:0007669"/>
    <property type="project" value="Ensembl"/>
</dbReference>
<dbReference type="GO" id="GO:0007616">
    <property type="term" value="P:long-term memory"/>
    <property type="evidence" value="ECO:0007669"/>
    <property type="project" value="Ensembl"/>
</dbReference>
<dbReference type="GO" id="GO:0034374">
    <property type="term" value="P:low-density lipoprotein particle remodeling"/>
    <property type="evidence" value="ECO:0007669"/>
    <property type="project" value="Ensembl"/>
</dbReference>
<dbReference type="GO" id="GO:0051651">
    <property type="term" value="P:maintenance of location in cell"/>
    <property type="evidence" value="ECO:0007669"/>
    <property type="project" value="Ensembl"/>
</dbReference>
<dbReference type="GO" id="GO:0032438">
    <property type="term" value="P:melanosome organization"/>
    <property type="evidence" value="ECO:0000250"/>
    <property type="project" value="UniProtKB"/>
</dbReference>
<dbReference type="GO" id="GO:1905907">
    <property type="term" value="P:negative regulation of amyloid fibril formation"/>
    <property type="evidence" value="ECO:0000250"/>
    <property type="project" value="UniProtKB"/>
</dbReference>
<dbReference type="GO" id="GO:1902430">
    <property type="term" value="P:negative regulation of amyloid-beta formation"/>
    <property type="evidence" value="ECO:0007669"/>
    <property type="project" value="Ensembl"/>
</dbReference>
<dbReference type="GO" id="GO:0043537">
    <property type="term" value="P:negative regulation of blood vessel endothelial cell migration"/>
    <property type="evidence" value="ECO:0007669"/>
    <property type="project" value="Ensembl"/>
</dbReference>
<dbReference type="GO" id="GO:0090090">
    <property type="term" value="P:negative regulation of canonical Wnt signaling pathway"/>
    <property type="evidence" value="ECO:0007669"/>
    <property type="project" value="Ensembl"/>
</dbReference>
<dbReference type="GO" id="GO:0045541">
    <property type="term" value="P:negative regulation of cholesterol biosynthetic process"/>
    <property type="evidence" value="ECO:0007669"/>
    <property type="project" value="Ensembl"/>
</dbReference>
<dbReference type="GO" id="GO:0001937">
    <property type="term" value="P:negative regulation of endothelial cell proliferation"/>
    <property type="evidence" value="ECO:0007669"/>
    <property type="project" value="Ensembl"/>
</dbReference>
<dbReference type="GO" id="GO:0010629">
    <property type="term" value="P:negative regulation of gene expression"/>
    <property type="evidence" value="ECO:0007669"/>
    <property type="project" value="Ensembl"/>
</dbReference>
<dbReference type="GO" id="GO:0050728">
    <property type="term" value="P:negative regulation of inflammatory response"/>
    <property type="evidence" value="ECO:0007669"/>
    <property type="project" value="Ensembl"/>
</dbReference>
<dbReference type="GO" id="GO:1900272">
    <property type="term" value="P:negative regulation of long-term synaptic potentiation"/>
    <property type="evidence" value="ECO:0007669"/>
    <property type="project" value="Ensembl"/>
</dbReference>
<dbReference type="GO" id="GO:0010977">
    <property type="term" value="P:negative regulation of neuron projection development"/>
    <property type="evidence" value="ECO:0007669"/>
    <property type="project" value="Ensembl"/>
</dbReference>
<dbReference type="GO" id="GO:0010544">
    <property type="term" value="P:negative regulation of platelet activation"/>
    <property type="evidence" value="ECO:0007669"/>
    <property type="project" value="Ensembl"/>
</dbReference>
<dbReference type="GO" id="GO:0050709">
    <property type="term" value="P:negative regulation of protein secretion"/>
    <property type="evidence" value="ECO:0007669"/>
    <property type="project" value="Ensembl"/>
</dbReference>
<dbReference type="GO" id="GO:0048662">
    <property type="term" value="P:negative regulation of smooth muscle cell proliferation"/>
    <property type="evidence" value="ECO:0007669"/>
    <property type="project" value="Ensembl"/>
</dbReference>
<dbReference type="GO" id="GO:0090209">
    <property type="term" value="P:negative regulation of triglyceride metabolic process"/>
    <property type="evidence" value="ECO:0007669"/>
    <property type="project" value="Ensembl"/>
</dbReference>
<dbReference type="GO" id="GO:0031175">
    <property type="term" value="P:neuron projection development"/>
    <property type="evidence" value="ECO:0000250"/>
    <property type="project" value="UniProtKB"/>
</dbReference>
<dbReference type="GO" id="GO:0038060">
    <property type="term" value="P:nitric oxide-cGMP-mediated signaling"/>
    <property type="evidence" value="ECO:0007669"/>
    <property type="project" value="Ensembl"/>
</dbReference>
<dbReference type="GO" id="GO:0097114">
    <property type="term" value="P:NMDA glutamate receptor clustering"/>
    <property type="evidence" value="ECO:0007669"/>
    <property type="project" value="Ensembl"/>
</dbReference>
<dbReference type="GO" id="GO:0033700">
    <property type="term" value="P:phospholipid efflux"/>
    <property type="evidence" value="ECO:0007669"/>
    <property type="project" value="Ensembl"/>
</dbReference>
<dbReference type="GO" id="GO:0044794">
    <property type="term" value="P:positive regulation by host of viral process"/>
    <property type="evidence" value="ECO:0007669"/>
    <property type="project" value="Ensembl"/>
</dbReference>
<dbReference type="GO" id="GO:1900223">
    <property type="term" value="P:positive regulation of amyloid-beta clearance"/>
    <property type="evidence" value="ECO:0000250"/>
    <property type="project" value="UniProtKB"/>
</dbReference>
<dbReference type="GO" id="GO:0010875">
    <property type="term" value="P:positive regulation of cholesterol efflux"/>
    <property type="evidence" value="ECO:0007669"/>
    <property type="project" value="Ensembl"/>
</dbReference>
<dbReference type="GO" id="GO:0090205">
    <property type="term" value="P:positive regulation of cholesterol metabolic process"/>
    <property type="evidence" value="ECO:0007669"/>
    <property type="project" value="Ensembl"/>
</dbReference>
<dbReference type="GO" id="GO:0060999">
    <property type="term" value="P:positive regulation of dendritic spine development"/>
    <property type="evidence" value="ECO:0007669"/>
    <property type="project" value="Ensembl"/>
</dbReference>
<dbReference type="GO" id="GO:1902952">
    <property type="term" value="P:positive regulation of dendritic spine maintenance"/>
    <property type="evidence" value="ECO:0007669"/>
    <property type="project" value="Ensembl"/>
</dbReference>
<dbReference type="GO" id="GO:0045893">
    <property type="term" value="P:positive regulation of DNA-templated transcription"/>
    <property type="evidence" value="ECO:0007669"/>
    <property type="project" value="Ensembl"/>
</dbReference>
<dbReference type="GO" id="GO:0045807">
    <property type="term" value="P:positive regulation of endocytosis"/>
    <property type="evidence" value="ECO:0007669"/>
    <property type="project" value="Ensembl"/>
</dbReference>
<dbReference type="GO" id="GO:0070374">
    <property type="term" value="P:positive regulation of ERK1 and ERK2 cascade"/>
    <property type="evidence" value="ECO:0007669"/>
    <property type="project" value="Ensembl"/>
</dbReference>
<dbReference type="GO" id="GO:0046889">
    <property type="term" value="P:positive regulation of lipid biosynthetic process"/>
    <property type="evidence" value="ECO:0007669"/>
    <property type="project" value="Ensembl"/>
</dbReference>
<dbReference type="GO" id="GO:1903002">
    <property type="term" value="P:positive regulation of lipid transport across blood-brain barrier"/>
    <property type="evidence" value="ECO:0007669"/>
    <property type="project" value="Ensembl"/>
</dbReference>
<dbReference type="GO" id="GO:0140077">
    <property type="term" value="P:positive regulation of lipoprotein transport"/>
    <property type="evidence" value="ECO:0007669"/>
    <property type="project" value="Ensembl"/>
</dbReference>
<dbReference type="GO" id="GO:0032805">
    <property type="term" value="P:positive regulation of low-density lipoprotein particle receptor catabolic process"/>
    <property type="evidence" value="ECO:0007669"/>
    <property type="project" value="Ensembl"/>
</dbReference>
<dbReference type="GO" id="GO:0051044">
    <property type="term" value="P:positive regulation of membrane protein ectodomain proteolysis"/>
    <property type="evidence" value="ECO:0007669"/>
    <property type="project" value="Ensembl"/>
</dbReference>
<dbReference type="GO" id="GO:0010976">
    <property type="term" value="P:positive regulation of neuron projection development"/>
    <property type="evidence" value="ECO:0007669"/>
    <property type="project" value="Ensembl"/>
</dbReference>
<dbReference type="GO" id="GO:0045429">
    <property type="term" value="P:positive regulation of nitric oxide biosynthetic process"/>
    <property type="evidence" value="ECO:0007669"/>
    <property type="project" value="Ensembl"/>
</dbReference>
<dbReference type="GO" id="GO:1902995">
    <property type="term" value="P:positive regulation of phospholipid efflux"/>
    <property type="evidence" value="ECO:0007669"/>
    <property type="project" value="Ensembl"/>
</dbReference>
<dbReference type="GO" id="GO:0017038">
    <property type="term" value="P:protein import"/>
    <property type="evidence" value="ECO:0007669"/>
    <property type="project" value="Ensembl"/>
</dbReference>
<dbReference type="GO" id="GO:0006898">
    <property type="term" value="P:receptor-mediated endocytosis"/>
    <property type="evidence" value="ECO:0007669"/>
    <property type="project" value="Ensembl"/>
</dbReference>
<dbReference type="GO" id="GO:0042981">
    <property type="term" value="P:regulation of apoptotic process"/>
    <property type="evidence" value="ECO:0007669"/>
    <property type="project" value="Ensembl"/>
</dbReference>
<dbReference type="GO" id="GO:2000822">
    <property type="term" value="P:regulation of behavioral fear response"/>
    <property type="evidence" value="ECO:0007669"/>
    <property type="project" value="Ensembl"/>
</dbReference>
<dbReference type="GO" id="GO:0032489">
    <property type="term" value="P:regulation of Cdc42 protein signal transduction"/>
    <property type="evidence" value="ECO:0007669"/>
    <property type="project" value="Ensembl"/>
</dbReference>
<dbReference type="GO" id="GO:1905890">
    <property type="term" value="P:regulation of cellular response to very-low-density lipoprotein particle stimulus"/>
    <property type="evidence" value="ECO:0007669"/>
    <property type="project" value="Ensembl"/>
</dbReference>
<dbReference type="GO" id="GO:0045088">
    <property type="term" value="P:regulation of innate immune response"/>
    <property type="evidence" value="ECO:0007669"/>
    <property type="project" value="Ensembl"/>
</dbReference>
<dbReference type="GO" id="GO:0061136">
    <property type="term" value="P:regulation of proteasomal protein catabolic process"/>
    <property type="evidence" value="ECO:0007669"/>
    <property type="project" value="Ensembl"/>
</dbReference>
<dbReference type="GO" id="GO:0043254">
    <property type="term" value="P:regulation of protein-containing complex assembly"/>
    <property type="evidence" value="ECO:0007669"/>
    <property type="project" value="Ensembl"/>
</dbReference>
<dbReference type="GO" id="GO:0061771">
    <property type="term" value="P:response to caloric restriction"/>
    <property type="evidence" value="ECO:0007669"/>
    <property type="project" value="Ensembl"/>
</dbReference>
<dbReference type="GO" id="GO:0002021">
    <property type="term" value="P:response to dietary excess"/>
    <property type="evidence" value="ECO:0007669"/>
    <property type="project" value="Ensembl"/>
</dbReference>
<dbReference type="GO" id="GO:0006979">
    <property type="term" value="P:response to oxidative stress"/>
    <property type="evidence" value="ECO:0007669"/>
    <property type="project" value="Ensembl"/>
</dbReference>
<dbReference type="GO" id="GO:0043691">
    <property type="term" value="P:reverse cholesterol transport"/>
    <property type="evidence" value="ECO:0007669"/>
    <property type="project" value="Ensembl"/>
</dbReference>
<dbReference type="GO" id="GO:0070328">
    <property type="term" value="P:triglyceride homeostasis"/>
    <property type="evidence" value="ECO:0007669"/>
    <property type="project" value="Ensembl"/>
</dbReference>
<dbReference type="GO" id="GO:0006641">
    <property type="term" value="P:triglyceride metabolic process"/>
    <property type="evidence" value="ECO:0007669"/>
    <property type="project" value="Ensembl"/>
</dbReference>
<dbReference type="GO" id="GO:0071830">
    <property type="term" value="P:triglyceride-rich lipoprotein particle clearance"/>
    <property type="evidence" value="ECO:0000250"/>
    <property type="project" value="UniProtKB"/>
</dbReference>
<dbReference type="GO" id="GO:0042311">
    <property type="term" value="P:vasodilation"/>
    <property type="evidence" value="ECO:0007669"/>
    <property type="project" value="Ensembl"/>
</dbReference>
<dbReference type="GO" id="GO:0034447">
    <property type="term" value="P:very-low-density lipoprotein particle clearance"/>
    <property type="evidence" value="ECO:0000250"/>
    <property type="project" value="UniProtKB"/>
</dbReference>
<dbReference type="GO" id="GO:0034372">
    <property type="term" value="P:very-low-density lipoprotein particle remodeling"/>
    <property type="evidence" value="ECO:0007669"/>
    <property type="project" value="Ensembl"/>
</dbReference>
<dbReference type="GO" id="GO:0019068">
    <property type="term" value="P:virion assembly"/>
    <property type="evidence" value="ECO:0007669"/>
    <property type="project" value="Ensembl"/>
</dbReference>
<dbReference type="FunFam" id="1.20.120.20:FF:000002">
    <property type="entry name" value="Apolipoprotein E"/>
    <property type="match status" value="1"/>
</dbReference>
<dbReference type="FunFam" id="1.20.120.20:FF:000003">
    <property type="entry name" value="Apolipoprotein E"/>
    <property type="match status" value="1"/>
</dbReference>
<dbReference type="Gene3D" id="1.20.120.20">
    <property type="entry name" value="Apolipoprotein"/>
    <property type="match status" value="2"/>
</dbReference>
<dbReference type="InterPro" id="IPR000074">
    <property type="entry name" value="ApoA_E"/>
</dbReference>
<dbReference type="InterPro" id="IPR050163">
    <property type="entry name" value="Apolipoprotein_A1/A4/E"/>
</dbReference>
<dbReference type="PANTHER" id="PTHR18976">
    <property type="entry name" value="APOLIPOPROTEIN"/>
    <property type="match status" value="1"/>
</dbReference>
<dbReference type="PANTHER" id="PTHR18976:SF2">
    <property type="entry name" value="APOLIPOPROTEIN E"/>
    <property type="match status" value="1"/>
</dbReference>
<dbReference type="Pfam" id="PF01442">
    <property type="entry name" value="Apolipoprotein"/>
    <property type="match status" value="1"/>
</dbReference>
<dbReference type="SUPFAM" id="SSF58113">
    <property type="entry name" value="Apolipoprotein A-I"/>
    <property type="match status" value="1"/>
</dbReference>
<sequence length="317" mass="36008">MKVLWAALLVTFLAGCQAKVEQPVESEPEPELRQQTEWQSGQPWELALGRFWDYLRWVQTLSEQVQEELLSSQVTQELTTLMDETMKELKAYKSELEEQLSPVAEETRARLSKELQAAQARLGADMEDVRSRLVQYRGEVQAMLGQSTEELRARLASHLRKLRKRLLRDADDLQKRLAVYQAGAREGAERGVSAIRERLGPLVEQGRVRAATVGSLAGQPLQERAQAWGERLRARMEEVGSRTRDRLDEVKEQVAEVRAKLEEQAQQISLQAEAFQARLKSWFEPLVEDMQRQWAGLVEKVQAAVGASTAPVPSDNH</sequence>
<gene>
    <name type="primary">APOE</name>
</gene>
<protein>
    <recommendedName>
        <fullName>Apolipoprotein E</fullName>
        <shortName>Apo-E</shortName>
    </recommendedName>
</protein>
<organism>
    <name type="scientific">Rhinopithecus roxellana</name>
    <name type="common">Golden snub-nosed monkey</name>
    <name type="synonym">Pygathrix roxellana</name>
    <dbReference type="NCBI Taxonomy" id="61622"/>
    <lineage>
        <taxon>Eukaryota</taxon>
        <taxon>Metazoa</taxon>
        <taxon>Chordata</taxon>
        <taxon>Craniata</taxon>
        <taxon>Vertebrata</taxon>
        <taxon>Euteleostomi</taxon>
        <taxon>Mammalia</taxon>
        <taxon>Eutheria</taxon>
        <taxon>Euarchontoglires</taxon>
        <taxon>Primates</taxon>
        <taxon>Haplorrhini</taxon>
        <taxon>Catarrhini</taxon>
        <taxon>Cercopithecidae</taxon>
        <taxon>Colobinae</taxon>
        <taxon>Rhinopithecus</taxon>
    </lineage>
</organism>
<keyword id="KW-0162">Chylomicron</keyword>
<keyword id="KW-0967">Endosome</keyword>
<keyword id="KW-0272">Extracellular matrix</keyword>
<keyword id="KW-0325">Glycoprotein</keyword>
<keyword id="KW-0345">HDL</keyword>
<keyword id="KW-0358">Heparin-binding</keyword>
<keyword id="KW-0445">Lipid transport</keyword>
<keyword id="KW-0446">Lipid-binding</keyword>
<keyword id="KW-0558">Oxidation</keyword>
<keyword id="KW-0597">Phosphoprotein</keyword>
<keyword id="KW-1185">Reference proteome</keyword>
<keyword id="KW-0677">Repeat</keyword>
<keyword id="KW-0964">Secreted</keyword>
<keyword id="KW-0732">Signal</keyword>
<keyword id="KW-0813">Transport</keyword>
<keyword id="KW-0850">VLDL</keyword>
<name>APOE_RHIRO</name>
<comment type="function">
    <text evidence="1">APOE is an apolipoprotein, a protein associating with lipid particles, that mainly functions in lipoprotein-mediated lipid transport between organs via the plasma and interstitial fluids. APOE is a core component of plasma lipoproteins and is involved in their production, conversion and clearance. Apolipoproteins are amphipathic molecules that interact both with lipids of the lipoprotein particle core and the aqueous environment of the plasma. As such, APOE associates with chylomicrons, chylomicron remnants, very low density lipoproteins (VLDL) and intermediate density lipoproteins (IDL) but shows a preferential binding to high-density lipoproteins (HDL). It also binds a wide range of cellular receptors including the LDL receptor/LDLR, the LDL receptor-related proteins LRP1, LRP2 and LRP8 and the very low-density lipoprotein receptor/VLDLR that mediate the cellular uptake of the APOE-containing lipoprotein particles. Finally, APOE also has a heparin-binding activity and binds heparan-sulfate proteoglycans on the surface of cells, a property that supports the capture and the receptor-mediated uptake of APOE-containing lipoproteins by cells. A main function of APOE is to mediate lipoprotein clearance through the uptake of chylomicrons, VLDLs, and HDLs by hepatocytes. APOE is also involved in the biosynthesis by the liver of VLDLs as well as their uptake by peripheral tissues ensuring the delivery of triglycerides and energy storage in muscle, heart and adipose tissues. By participating in the lipoprotein-mediated distribution of lipids among tissues, APOE plays a critical role in plasma and tissues lipid homeostasis. APOE is also involved in two steps of reverse cholesterol transport, the HDLs-mediated transport of cholesterol from peripheral tissues to the liver, and thereby plays an important role in cholesterol homeostasis. First, it is functionally associated with ABCA1 in the biogenesis of HDLs in tissues. Second, it is enriched in circulating HDLs and mediates their uptake by hepatocytes. APOE also plays an important role in lipid transport in the central nervous system, regulating neuron survival and sprouting.</text>
</comment>
<comment type="subunit">
    <text evidence="1">Homotetramer. May interact with ABCA1; functionally associated with ABCA1 in the biogenesis of HDLs. May interact with APP/A4 amyloid-beta peptide; the interaction is extremely stable in vitro but its physiological significance is unclear. May interact with MAPT. May interact with MAP2. In the cerebrospinal fluid, interacts with secreted SORL1. Interacts with PMEL; this allows the loading of PMEL luminal fragment on ILVs to induce fibril nucleation.</text>
</comment>
<comment type="subcellular location">
    <subcellularLocation>
        <location evidence="1">Secreted</location>
    </subcellularLocation>
    <subcellularLocation>
        <location evidence="1">Secreted</location>
        <location evidence="1">Extracellular space</location>
    </subcellularLocation>
    <subcellularLocation>
        <location evidence="1">Secreted</location>
        <location evidence="1">Extracellular space</location>
        <location evidence="1">Extracellular matrix</location>
    </subcellularLocation>
    <subcellularLocation>
        <location evidence="1">Extracellular vesicle</location>
    </subcellularLocation>
    <subcellularLocation>
        <location evidence="1">Endosome</location>
        <location evidence="1">Multivesicular body</location>
    </subcellularLocation>
    <text evidence="1">In the plasma, APOE is associated with chylomicrons, chylomicrons remnants, VLDL, LDL and HDL lipoproteins. Lipid poor oligomeric APOE is associated with the extracellular matrix in a calcium- and heparan-sulfate proteoglycans-dependent manner. Lipidation induces the release from the extracellular matrix. Colocalizes with CD63 and PMEL at exosomes and in intraluminal vesicles within multivesicular endosomes.</text>
</comment>
<comment type="PTM">
    <text evidence="1">APOE exists as multiple glycosylated and sialylated glycoforms within cells and in plasma. The extent of glycosylation and sialylation are tissue and context specific.</text>
</comment>
<comment type="PTM">
    <text evidence="1">Glycated in plasma VLDL.</text>
</comment>
<comment type="PTM">
    <text evidence="1">Phosphorylated by FAM20C in the extracellular medium.</text>
</comment>
<comment type="similarity">
    <text evidence="4">Belongs to the apolipoprotein A1/A4/E family.</text>
</comment>
<accession>P0DO95</accession>
<feature type="signal peptide" evidence="3">
    <location>
        <begin position="1"/>
        <end position="18"/>
    </location>
</feature>
<feature type="chain" id="PRO_0000436233" description="Apolipoprotein E">
    <location>
        <begin position="19"/>
        <end position="317"/>
    </location>
</feature>
<feature type="repeat" description="1">
    <location>
        <begin position="80"/>
        <end position="101"/>
    </location>
</feature>
<feature type="repeat" description="2">
    <location>
        <begin position="102"/>
        <end position="123"/>
    </location>
</feature>
<feature type="repeat" description="3">
    <location>
        <begin position="124"/>
        <end position="145"/>
    </location>
</feature>
<feature type="repeat" description="4">
    <location>
        <begin position="146"/>
        <end position="167"/>
    </location>
</feature>
<feature type="repeat" description="5">
    <location>
        <begin position="168"/>
        <end position="189"/>
    </location>
</feature>
<feature type="repeat" description="6">
    <location>
        <begin position="190"/>
        <end position="211"/>
    </location>
</feature>
<feature type="repeat" description="7">
    <location>
        <begin position="212"/>
        <end position="233"/>
    </location>
</feature>
<feature type="repeat" description="8">
    <location>
        <begin position="234"/>
        <end position="255"/>
    </location>
</feature>
<feature type="region of interest" description="8 X 22 AA approximate tandem repeats">
    <location>
        <begin position="80"/>
        <end position="255"/>
    </location>
</feature>
<feature type="region of interest" description="LDL and other lipoprotein receptors binding" evidence="1">
    <location>
        <begin position="158"/>
        <end position="168"/>
    </location>
</feature>
<feature type="region of interest" description="Lipid-binding and lipoprotein association" evidence="1">
    <location>
        <begin position="210"/>
        <end position="290"/>
    </location>
</feature>
<feature type="region of interest" description="Homooligomerization" evidence="1">
    <location>
        <begin position="266"/>
        <end position="317"/>
    </location>
</feature>
<feature type="region of interest" description="Specificity for association with VLDL" evidence="1">
    <location>
        <begin position="278"/>
        <end position="290"/>
    </location>
</feature>
<feature type="binding site" evidence="1">
    <location>
        <begin position="162"/>
        <end position="165"/>
    </location>
    <ligand>
        <name>heparin</name>
        <dbReference type="ChEBI" id="CHEBI:28304"/>
    </ligand>
</feature>
<feature type="binding site" evidence="1">
    <location>
        <begin position="229"/>
        <end position="236"/>
    </location>
    <ligand>
        <name>heparin</name>
        <dbReference type="ChEBI" id="CHEBI:28304"/>
    </ligand>
</feature>
<feature type="modified residue" description="Methionine sulfoxide" evidence="2">
    <location>
        <position position="143"/>
    </location>
</feature>
<feature type="modified residue" description="Phosphoserine" evidence="1">
    <location>
        <position position="147"/>
    </location>
</feature>
<feature type="glycosylation site" description="O-linked (GalNAc...) threonine" evidence="1">
    <location>
        <position position="212"/>
    </location>
</feature>
<proteinExistence type="inferred from homology"/>
<reference key="1">
    <citation type="submission" date="2014-01" db="EMBL/GenBank/DDBJ databases">
        <authorList>
            <person name="Wang B."/>
            <person name="Zhou X."/>
        </authorList>
    </citation>
    <scope>NUCLEOTIDE SEQUENCE [LARGE SCALE GENOMIC DNA]</scope>
</reference>
<reference key="2">
    <citation type="unpublished observations" date="2016-03">
        <authorList>
            <person name="Puppione D.L."/>
        </authorList>
    </citation>
    <scope>IDENTIFICATION</scope>
</reference>